<organism>
    <name type="scientific">Actinobacillus succinogenes (strain ATCC 55618 / DSM 22257 / CCUG 43843 / 130Z)</name>
    <dbReference type="NCBI Taxonomy" id="339671"/>
    <lineage>
        <taxon>Bacteria</taxon>
        <taxon>Pseudomonadati</taxon>
        <taxon>Pseudomonadota</taxon>
        <taxon>Gammaproteobacteria</taxon>
        <taxon>Pasteurellales</taxon>
        <taxon>Pasteurellaceae</taxon>
        <taxon>Actinobacillus</taxon>
    </lineage>
</organism>
<sequence length="149" mass="15994">MQVILLDKIVHLGNVGDQVNVKSGFARNFLIPQGKAVMATKANIEFFEARRAEFEAKAATELAEAQARAEKIAALESVTIVSKAGEEGRLFGSITTRDIADAVTAAGVEVSKSEVRLSTGPLRTTGDHEVRFQLHGEVFTTLNVVVVAE</sequence>
<dbReference type="EMBL" id="CP000746">
    <property type="protein sequence ID" value="ABR74130.1"/>
    <property type="molecule type" value="Genomic_DNA"/>
</dbReference>
<dbReference type="RefSeq" id="WP_012072509.1">
    <property type="nucleotide sequence ID" value="NC_009655.1"/>
</dbReference>
<dbReference type="SMR" id="A6VMD3"/>
<dbReference type="STRING" id="339671.Asuc_0758"/>
<dbReference type="KEGG" id="asu:Asuc_0758"/>
<dbReference type="eggNOG" id="COG0359">
    <property type="taxonomic scope" value="Bacteria"/>
</dbReference>
<dbReference type="HOGENOM" id="CLU_078938_4_1_6"/>
<dbReference type="OrthoDB" id="9788336at2"/>
<dbReference type="Proteomes" id="UP000001114">
    <property type="component" value="Chromosome"/>
</dbReference>
<dbReference type="GO" id="GO:1990904">
    <property type="term" value="C:ribonucleoprotein complex"/>
    <property type="evidence" value="ECO:0007669"/>
    <property type="project" value="UniProtKB-KW"/>
</dbReference>
<dbReference type="GO" id="GO:0005840">
    <property type="term" value="C:ribosome"/>
    <property type="evidence" value="ECO:0007669"/>
    <property type="project" value="UniProtKB-KW"/>
</dbReference>
<dbReference type="GO" id="GO:0019843">
    <property type="term" value="F:rRNA binding"/>
    <property type="evidence" value="ECO:0007669"/>
    <property type="project" value="UniProtKB-UniRule"/>
</dbReference>
<dbReference type="GO" id="GO:0003735">
    <property type="term" value="F:structural constituent of ribosome"/>
    <property type="evidence" value="ECO:0007669"/>
    <property type="project" value="InterPro"/>
</dbReference>
<dbReference type="GO" id="GO:0006412">
    <property type="term" value="P:translation"/>
    <property type="evidence" value="ECO:0007669"/>
    <property type="project" value="UniProtKB-UniRule"/>
</dbReference>
<dbReference type="FunFam" id="3.10.430.100:FF:000001">
    <property type="entry name" value="50S ribosomal protein L9"/>
    <property type="match status" value="1"/>
</dbReference>
<dbReference type="FunFam" id="3.40.5.10:FF:000001">
    <property type="entry name" value="50S ribosomal protein L9"/>
    <property type="match status" value="1"/>
</dbReference>
<dbReference type="Gene3D" id="3.10.430.100">
    <property type="entry name" value="Ribosomal protein L9, C-terminal domain"/>
    <property type="match status" value="1"/>
</dbReference>
<dbReference type="Gene3D" id="3.40.5.10">
    <property type="entry name" value="Ribosomal protein L9, N-terminal domain"/>
    <property type="match status" value="1"/>
</dbReference>
<dbReference type="HAMAP" id="MF_00503">
    <property type="entry name" value="Ribosomal_bL9"/>
    <property type="match status" value="1"/>
</dbReference>
<dbReference type="InterPro" id="IPR000244">
    <property type="entry name" value="Ribosomal_bL9"/>
</dbReference>
<dbReference type="InterPro" id="IPR009027">
    <property type="entry name" value="Ribosomal_bL9/RNase_H1_N"/>
</dbReference>
<dbReference type="InterPro" id="IPR020594">
    <property type="entry name" value="Ribosomal_bL9_bac/chp"/>
</dbReference>
<dbReference type="InterPro" id="IPR020069">
    <property type="entry name" value="Ribosomal_bL9_C"/>
</dbReference>
<dbReference type="InterPro" id="IPR036791">
    <property type="entry name" value="Ribosomal_bL9_C_sf"/>
</dbReference>
<dbReference type="InterPro" id="IPR020070">
    <property type="entry name" value="Ribosomal_bL9_N"/>
</dbReference>
<dbReference type="InterPro" id="IPR036935">
    <property type="entry name" value="Ribosomal_bL9_N_sf"/>
</dbReference>
<dbReference type="NCBIfam" id="TIGR00158">
    <property type="entry name" value="L9"/>
    <property type="match status" value="1"/>
</dbReference>
<dbReference type="PANTHER" id="PTHR21368">
    <property type="entry name" value="50S RIBOSOMAL PROTEIN L9"/>
    <property type="match status" value="1"/>
</dbReference>
<dbReference type="Pfam" id="PF03948">
    <property type="entry name" value="Ribosomal_L9_C"/>
    <property type="match status" value="1"/>
</dbReference>
<dbReference type="Pfam" id="PF01281">
    <property type="entry name" value="Ribosomal_L9_N"/>
    <property type="match status" value="1"/>
</dbReference>
<dbReference type="SUPFAM" id="SSF55658">
    <property type="entry name" value="L9 N-domain-like"/>
    <property type="match status" value="1"/>
</dbReference>
<dbReference type="SUPFAM" id="SSF55653">
    <property type="entry name" value="Ribosomal protein L9 C-domain"/>
    <property type="match status" value="1"/>
</dbReference>
<dbReference type="PROSITE" id="PS00651">
    <property type="entry name" value="RIBOSOMAL_L9"/>
    <property type="match status" value="1"/>
</dbReference>
<protein>
    <recommendedName>
        <fullName evidence="1">Large ribosomal subunit protein bL9</fullName>
    </recommendedName>
    <alternativeName>
        <fullName evidence="2">50S ribosomal protein L9</fullName>
    </alternativeName>
</protein>
<gene>
    <name evidence="1" type="primary">rplI</name>
    <name type="ordered locus">Asuc_0758</name>
</gene>
<reference key="1">
    <citation type="journal article" date="2010" name="BMC Genomics">
        <title>A genomic perspective on the potential of Actinobacillus succinogenes for industrial succinate production.</title>
        <authorList>
            <person name="McKinlay J.B."/>
            <person name="Laivenieks M."/>
            <person name="Schindler B.D."/>
            <person name="McKinlay A.A."/>
            <person name="Siddaramappa S."/>
            <person name="Challacombe J.F."/>
            <person name="Lowry S.R."/>
            <person name="Clum A."/>
            <person name="Lapidus A.L."/>
            <person name="Burkhart K.B."/>
            <person name="Harkins V."/>
            <person name="Vieille C."/>
        </authorList>
    </citation>
    <scope>NUCLEOTIDE SEQUENCE [LARGE SCALE GENOMIC DNA]</scope>
    <source>
        <strain>ATCC 55618 / DSM 22257 / CCUG 43843 / 130Z</strain>
    </source>
</reference>
<keyword id="KW-1185">Reference proteome</keyword>
<keyword id="KW-0687">Ribonucleoprotein</keyword>
<keyword id="KW-0689">Ribosomal protein</keyword>
<keyword id="KW-0694">RNA-binding</keyword>
<keyword id="KW-0699">rRNA-binding</keyword>
<name>RL9_ACTSZ</name>
<proteinExistence type="inferred from homology"/>
<accession>A6VMD3</accession>
<evidence type="ECO:0000255" key="1">
    <source>
        <dbReference type="HAMAP-Rule" id="MF_00503"/>
    </source>
</evidence>
<evidence type="ECO:0000305" key="2"/>
<comment type="function">
    <text evidence="1">Binds to the 23S rRNA.</text>
</comment>
<comment type="similarity">
    <text evidence="1">Belongs to the bacterial ribosomal protein bL9 family.</text>
</comment>
<feature type="chain" id="PRO_1000072444" description="Large ribosomal subunit protein bL9">
    <location>
        <begin position="1"/>
        <end position="149"/>
    </location>
</feature>